<name>KCY_BURM1</name>
<keyword id="KW-0067">ATP-binding</keyword>
<keyword id="KW-0963">Cytoplasm</keyword>
<keyword id="KW-0418">Kinase</keyword>
<keyword id="KW-0547">Nucleotide-binding</keyword>
<keyword id="KW-1185">Reference proteome</keyword>
<keyword id="KW-0808">Transferase</keyword>
<organism>
    <name type="scientific">Burkholderia multivorans (strain ATCC 17616 / 249)</name>
    <dbReference type="NCBI Taxonomy" id="395019"/>
    <lineage>
        <taxon>Bacteria</taxon>
        <taxon>Pseudomonadati</taxon>
        <taxon>Pseudomonadota</taxon>
        <taxon>Betaproteobacteria</taxon>
        <taxon>Burkholderiales</taxon>
        <taxon>Burkholderiaceae</taxon>
        <taxon>Burkholderia</taxon>
        <taxon>Burkholderia cepacia complex</taxon>
    </lineage>
</organism>
<feature type="chain" id="PRO_1000100653" description="Cytidylate kinase">
    <location>
        <begin position="1"/>
        <end position="228"/>
    </location>
</feature>
<feature type="binding site" evidence="1">
    <location>
        <begin position="17"/>
        <end position="25"/>
    </location>
    <ligand>
        <name>ATP</name>
        <dbReference type="ChEBI" id="CHEBI:30616"/>
    </ligand>
</feature>
<protein>
    <recommendedName>
        <fullName evidence="1">Cytidylate kinase</fullName>
        <shortName evidence="1">CK</shortName>
        <ecNumber evidence="1">2.7.4.25</ecNumber>
    </recommendedName>
    <alternativeName>
        <fullName evidence="1">Cytidine monophosphate kinase</fullName>
        <shortName evidence="1">CMP kinase</shortName>
    </alternativeName>
</protein>
<accession>A9ADV5</accession>
<reference key="1">
    <citation type="submission" date="2007-10" db="EMBL/GenBank/DDBJ databases">
        <title>Complete sequence of chromosome 1 of Burkholderia multivorans ATCC 17616.</title>
        <authorList>
            <person name="Copeland A."/>
            <person name="Lucas S."/>
            <person name="Lapidus A."/>
            <person name="Barry K."/>
            <person name="Glavina del Rio T."/>
            <person name="Dalin E."/>
            <person name="Tice H."/>
            <person name="Pitluck S."/>
            <person name="Chain P."/>
            <person name="Malfatti S."/>
            <person name="Shin M."/>
            <person name="Vergez L."/>
            <person name="Schmutz J."/>
            <person name="Larimer F."/>
            <person name="Land M."/>
            <person name="Hauser L."/>
            <person name="Kyrpides N."/>
            <person name="Kim E."/>
            <person name="Tiedje J."/>
            <person name="Richardson P."/>
        </authorList>
    </citation>
    <scope>NUCLEOTIDE SEQUENCE [LARGE SCALE GENOMIC DNA]</scope>
    <source>
        <strain>ATCC 17616 / 249</strain>
    </source>
</reference>
<reference key="2">
    <citation type="submission" date="2007-04" db="EMBL/GenBank/DDBJ databases">
        <title>Complete genome sequence of Burkholderia multivorans ATCC 17616.</title>
        <authorList>
            <person name="Ohtsubo Y."/>
            <person name="Yamashita A."/>
            <person name="Kurokawa K."/>
            <person name="Takami H."/>
            <person name="Yuhara S."/>
            <person name="Nishiyama E."/>
            <person name="Endo R."/>
            <person name="Miyazaki R."/>
            <person name="Ono A."/>
            <person name="Yano K."/>
            <person name="Ito M."/>
            <person name="Sota M."/>
            <person name="Yuji N."/>
            <person name="Hattori M."/>
            <person name="Tsuda M."/>
        </authorList>
    </citation>
    <scope>NUCLEOTIDE SEQUENCE [LARGE SCALE GENOMIC DNA]</scope>
    <source>
        <strain>ATCC 17616 / 249</strain>
    </source>
</reference>
<evidence type="ECO:0000255" key="1">
    <source>
        <dbReference type="HAMAP-Rule" id="MF_00238"/>
    </source>
</evidence>
<sequence length="228" mass="24459">MKSTRPFHPTPVITIDGPTASGKGTVAALVAAHLGFHLLDSGALYRLAALASMRYDIAAEDVDALVKLIDDLHITFREGCAQLDGVDVSNDIRAEAVGNRASAIAVHGPVRTALVARQRAFRKTPGLVADGRDMGTVIFPDAMLKVFLTASAEARAARRHKQLMQKGFSANIDDLLRDLRERDARDSNRAAAPLKPAADAKLLDTSALSVDEAVDQVLQWYRALGQPA</sequence>
<proteinExistence type="inferred from homology"/>
<dbReference type="EC" id="2.7.4.25" evidence="1"/>
<dbReference type="EMBL" id="CP000868">
    <property type="protein sequence ID" value="ABX15943.1"/>
    <property type="molecule type" value="Genomic_DNA"/>
</dbReference>
<dbReference type="EMBL" id="AP009385">
    <property type="protein sequence ID" value="BAG42927.1"/>
    <property type="molecule type" value="Genomic_DNA"/>
</dbReference>
<dbReference type="RefSeq" id="WP_006400728.1">
    <property type="nucleotide sequence ID" value="NC_010804.1"/>
</dbReference>
<dbReference type="SMR" id="A9ADV5"/>
<dbReference type="STRING" id="395019.BMULJ_00981"/>
<dbReference type="KEGG" id="bmj:BMULJ_00981"/>
<dbReference type="KEGG" id="bmu:Bmul_2258"/>
<dbReference type="eggNOG" id="COG0283">
    <property type="taxonomic scope" value="Bacteria"/>
</dbReference>
<dbReference type="HOGENOM" id="CLU_079959_2_0_4"/>
<dbReference type="Proteomes" id="UP000008815">
    <property type="component" value="Chromosome 1"/>
</dbReference>
<dbReference type="GO" id="GO:0005829">
    <property type="term" value="C:cytosol"/>
    <property type="evidence" value="ECO:0007669"/>
    <property type="project" value="TreeGrafter"/>
</dbReference>
<dbReference type="GO" id="GO:0005524">
    <property type="term" value="F:ATP binding"/>
    <property type="evidence" value="ECO:0007669"/>
    <property type="project" value="UniProtKB-UniRule"/>
</dbReference>
<dbReference type="GO" id="GO:0036430">
    <property type="term" value="F:CMP kinase activity"/>
    <property type="evidence" value="ECO:0007669"/>
    <property type="project" value="RHEA"/>
</dbReference>
<dbReference type="GO" id="GO:0036431">
    <property type="term" value="F:dCMP kinase activity"/>
    <property type="evidence" value="ECO:0007669"/>
    <property type="project" value="RHEA"/>
</dbReference>
<dbReference type="GO" id="GO:0015949">
    <property type="term" value="P:nucleobase-containing small molecule interconversion"/>
    <property type="evidence" value="ECO:0007669"/>
    <property type="project" value="TreeGrafter"/>
</dbReference>
<dbReference type="GO" id="GO:0006220">
    <property type="term" value="P:pyrimidine nucleotide metabolic process"/>
    <property type="evidence" value="ECO:0007669"/>
    <property type="project" value="UniProtKB-UniRule"/>
</dbReference>
<dbReference type="CDD" id="cd02020">
    <property type="entry name" value="CMPK"/>
    <property type="match status" value="1"/>
</dbReference>
<dbReference type="Gene3D" id="3.40.50.300">
    <property type="entry name" value="P-loop containing nucleotide triphosphate hydrolases"/>
    <property type="match status" value="1"/>
</dbReference>
<dbReference type="HAMAP" id="MF_00238">
    <property type="entry name" value="Cytidyl_kinase_type1"/>
    <property type="match status" value="1"/>
</dbReference>
<dbReference type="InterPro" id="IPR003136">
    <property type="entry name" value="Cytidylate_kin"/>
</dbReference>
<dbReference type="InterPro" id="IPR011994">
    <property type="entry name" value="Cytidylate_kinase_dom"/>
</dbReference>
<dbReference type="InterPro" id="IPR027417">
    <property type="entry name" value="P-loop_NTPase"/>
</dbReference>
<dbReference type="NCBIfam" id="TIGR00017">
    <property type="entry name" value="cmk"/>
    <property type="match status" value="1"/>
</dbReference>
<dbReference type="PANTHER" id="PTHR21299:SF2">
    <property type="entry name" value="CYTIDYLATE KINASE"/>
    <property type="match status" value="1"/>
</dbReference>
<dbReference type="PANTHER" id="PTHR21299">
    <property type="entry name" value="CYTIDYLATE KINASE/PANTOATE-BETA-ALANINE LIGASE"/>
    <property type="match status" value="1"/>
</dbReference>
<dbReference type="Pfam" id="PF02224">
    <property type="entry name" value="Cytidylate_kin"/>
    <property type="match status" value="1"/>
</dbReference>
<dbReference type="SUPFAM" id="SSF52540">
    <property type="entry name" value="P-loop containing nucleoside triphosphate hydrolases"/>
    <property type="match status" value="1"/>
</dbReference>
<gene>
    <name evidence="1" type="primary">cmk</name>
    <name type="ordered locus">Bmul_2258</name>
    <name type="ordered locus">BMULJ_00981</name>
</gene>
<comment type="catalytic activity">
    <reaction evidence="1">
        <text>CMP + ATP = CDP + ADP</text>
        <dbReference type="Rhea" id="RHEA:11600"/>
        <dbReference type="ChEBI" id="CHEBI:30616"/>
        <dbReference type="ChEBI" id="CHEBI:58069"/>
        <dbReference type="ChEBI" id="CHEBI:60377"/>
        <dbReference type="ChEBI" id="CHEBI:456216"/>
        <dbReference type="EC" id="2.7.4.25"/>
    </reaction>
</comment>
<comment type="catalytic activity">
    <reaction evidence="1">
        <text>dCMP + ATP = dCDP + ADP</text>
        <dbReference type="Rhea" id="RHEA:25094"/>
        <dbReference type="ChEBI" id="CHEBI:30616"/>
        <dbReference type="ChEBI" id="CHEBI:57566"/>
        <dbReference type="ChEBI" id="CHEBI:58593"/>
        <dbReference type="ChEBI" id="CHEBI:456216"/>
        <dbReference type="EC" id="2.7.4.25"/>
    </reaction>
</comment>
<comment type="subcellular location">
    <subcellularLocation>
        <location evidence="1">Cytoplasm</location>
    </subcellularLocation>
</comment>
<comment type="similarity">
    <text evidence="1">Belongs to the cytidylate kinase family. Type 1 subfamily.</text>
</comment>